<evidence type="ECO:0000255" key="1">
    <source>
        <dbReference type="HAMAP-Rule" id="MF_00183"/>
    </source>
</evidence>
<organism>
    <name type="scientific">Helicobacter pylori (strain P12)</name>
    <dbReference type="NCBI Taxonomy" id="570508"/>
    <lineage>
        <taxon>Bacteria</taxon>
        <taxon>Pseudomonadati</taxon>
        <taxon>Campylobacterota</taxon>
        <taxon>Epsilonproteobacteria</taxon>
        <taxon>Campylobacterales</taxon>
        <taxon>Helicobacteraceae</taxon>
        <taxon>Helicobacter</taxon>
    </lineage>
</organism>
<reference key="1">
    <citation type="submission" date="2008-10" db="EMBL/GenBank/DDBJ databases">
        <title>The complete genome sequence of Helicobacter pylori strain P12.</title>
        <authorList>
            <person name="Fischer W."/>
            <person name="Windhager L."/>
            <person name="Karnholz A."/>
            <person name="Zeiller M."/>
            <person name="Zimmer R."/>
            <person name="Haas R."/>
        </authorList>
    </citation>
    <scope>NUCLEOTIDE SEQUENCE [LARGE SCALE GENOMIC DNA]</scope>
    <source>
        <strain>P12</strain>
    </source>
</reference>
<sequence>MVVLGSTGSIGKNALKIAKKFGVEIEALSCGKNIALINEQIKVFKPKKVAILDPNDLNDLEPLGAKVFVGLEGIDAMIEECVSNLVLNAIVGVAGLKASFKSLQRNKKLALANKESLVSAGHLLDISQITPVDSEHFGLWALLQNKTLKPKSLIISASGGAFRDTPLELIAIQNAQNALKHPNWSMGSKITIDSASMVNKLFEILETYWLFGASLKIDALIERSSIVHALVEFEDNSIIAHLASADMQLPISYAIDPKLASLNASIKPLDLYALSAIKFEPISMERYTLWRYKDLLLENPKLGVVLNASNEVAIEKFLDKEIAFGGLIQTISQALELYAKMPFKLSSLDEVLALDREVRERFKNVARV</sequence>
<comment type="function">
    <text evidence="1">Catalyzes the NADPH-dependent rearrangement and reduction of 1-deoxy-D-xylulose-5-phosphate (DXP) to 2-C-methyl-D-erythritol 4-phosphate (MEP).</text>
</comment>
<comment type="catalytic activity">
    <reaction evidence="1">
        <text>2-C-methyl-D-erythritol 4-phosphate + NADP(+) = 1-deoxy-D-xylulose 5-phosphate + NADPH + H(+)</text>
        <dbReference type="Rhea" id="RHEA:13717"/>
        <dbReference type="ChEBI" id="CHEBI:15378"/>
        <dbReference type="ChEBI" id="CHEBI:57783"/>
        <dbReference type="ChEBI" id="CHEBI:57792"/>
        <dbReference type="ChEBI" id="CHEBI:58262"/>
        <dbReference type="ChEBI" id="CHEBI:58349"/>
        <dbReference type="EC" id="1.1.1.267"/>
    </reaction>
    <physiologicalReaction direction="right-to-left" evidence="1">
        <dbReference type="Rhea" id="RHEA:13719"/>
    </physiologicalReaction>
</comment>
<comment type="cofactor">
    <cofactor evidence="1">
        <name>Mg(2+)</name>
        <dbReference type="ChEBI" id="CHEBI:18420"/>
    </cofactor>
    <cofactor evidence="1">
        <name>Mn(2+)</name>
        <dbReference type="ChEBI" id="CHEBI:29035"/>
    </cofactor>
</comment>
<comment type="pathway">
    <text evidence="1">Isoprenoid biosynthesis; isopentenyl diphosphate biosynthesis via DXP pathway; isopentenyl diphosphate from 1-deoxy-D-xylulose 5-phosphate: step 1/6.</text>
</comment>
<comment type="similarity">
    <text evidence="1">Belongs to the DXR family.</text>
</comment>
<gene>
    <name evidence="1" type="primary">dxr</name>
    <name type="ordered locus">HPP12_0217</name>
</gene>
<protein>
    <recommendedName>
        <fullName evidence="1">1-deoxy-D-xylulose 5-phosphate reductoisomerase</fullName>
        <shortName evidence="1">DXP reductoisomerase</shortName>
        <ecNumber evidence="1">1.1.1.267</ecNumber>
    </recommendedName>
    <alternativeName>
        <fullName evidence="1">1-deoxyxylulose-5-phosphate reductoisomerase</fullName>
    </alternativeName>
    <alternativeName>
        <fullName evidence="1">2-C-methyl-D-erythritol 4-phosphate synthase</fullName>
    </alternativeName>
</protein>
<keyword id="KW-0414">Isoprene biosynthesis</keyword>
<keyword id="KW-0464">Manganese</keyword>
<keyword id="KW-0479">Metal-binding</keyword>
<keyword id="KW-0521">NADP</keyword>
<keyword id="KW-0560">Oxidoreductase</keyword>
<name>DXR_HELP2</name>
<feature type="chain" id="PRO_1000098500" description="1-deoxy-D-xylulose 5-phosphate reductoisomerase">
    <location>
        <begin position="1"/>
        <end position="368"/>
    </location>
</feature>
<feature type="binding site" evidence="1">
    <location>
        <position position="7"/>
    </location>
    <ligand>
        <name>NADPH</name>
        <dbReference type="ChEBI" id="CHEBI:57783"/>
    </ligand>
</feature>
<feature type="binding site" evidence="1">
    <location>
        <position position="8"/>
    </location>
    <ligand>
        <name>NADPH</name>
        <dbReference type="ChEBI" id="CHEBI:57783"/>
    </ligand>
</feature>
<feature type="binding site" evidence="1">
    <location>
        <position position="9"/>
    </location>
    <ligand>
        <name>NADPH</name>
        <dbReference type="ChEBI" id="CHEBI:57783"/>
    </ligand>
</feature>
<feature type="binding site" evidence="1">
    <location>
        <position position="10"/>
    </location>
    <ligand>
        <name>NADPH</name>
        <dbReference type="ChEBI" id="CHEBI:57783"/>
    </ligand>
</feature>
<feature type="binding site" evidence="1">
    <location>
        <position position="31"/>
    </location>
    <ligand>
        <name>NADPH</name>
        <dbReference type="ChEBI" id="CHEBI:57783"/>
    </ligand>
</feature>
<feature type="binding site" evidence="1">
    <location>
        <position position="32"/>
    </location>
    <ligand>
        <name>NADPH</name>
        <dbReference type="ChEBI" id="CHEBI:57783"/>
    </ligand>
</feature>
<feature type="binding site" evidence="1">
    <location>
        <position position="33"/>
    </location>
    <ligand>
        <name>NADPH</name>
        <dbReference type="ChEBI" id="CHEBI:57783"/>
    </ligand>
</feature>
<feature type="binding site" evidence="1">
    <location>
        <position position="113"/>
    </location>
    <ligand>
        <name>NADPH</name>
        <dbReference type="ChEBI" id="CHEBI:57783"/>
    </ligand>
</feature>
<feature type="binding site" evidence="1">
    <location>
        <position position="114"/>
    </location>
    <ligand>
        <name>1-deoxy-D-xylulose 5-phosphate</name>
        <dbReference type="ChEBI" id="CHEBI:57792"/>
    </ligand>
</feature>
<feature type="binding site" evidence="1">
    <location>
        <position position="115"/>
    </location>
    <ligand>
        <name>NADPH</name>
        <dbReference type="ChEBI" id="CHEBI:57783"/>
    </ligand>
</feature>
<feature type="binding site" evidence="1">
    <location>
        <position position="133"/>
    </location>
    <ligand>
        <name>Mn(2+)</name>
        <dbReference type="ChEBI" id="CHEBI:29035"/>
    </ligand>
</feature>
<feature type="binding site" evidence="1">
    <location>
        <position position="134"/>
    </location>
    <ligand>
        <name>1-deoxy-D-xylulose 5-phosphate</name>
        <dbReference type="ChEBI" id="CHEBI:57792"/>
    </ligand>
</feature>
<feature type="binding site" evidence="1">
    <location>
        <position position="135"/>
    </location>
    <ligand>
        <name>1-deoxy-D-xylulose 5-phosphate</name>
        <dbReference type="ChEBI" id="CHEBI:57792"/>
    </ligand>
</feature>
<feature type="binding site" evidence="1">
    <location>
        <position position="135"/>
    </location>
    <ligand>
        <name>Mn(2+)</name>
        <dbReference type="ChEBI" id="CHEBI:29035"/>
    </ligand>
</feature>
<feature type="binding site" evidence="1">
    <location>
        <position position="158"/>
    </location>
    <ligand>
        <name>1-deoxy-D-xylulose 5-phosphate</name>
        <dbReference type="ChEBI" id="CHEBI:57792"/>
    </ligand>
</feature>
<feature type="binding site" evidence="1">
    <location>
        <position position="181"/>
    </location>
    <ligand>
        <name>1-deoxy-D-xylulose 5-phosphate</name>
        <dbReference type="ChEBI" id="CHEBI:57792"/>
    </ligand>
</feature>
<feature type="binding site" evidence="1">
    <location>
        <position position="187"/>
    </location>
    <ligand>
        <name>NADPH</name>
        <dbReference type="ChEBI" id="CHEBI:57783"/>
    </ligand>
</feature>
<feature type="binding site" evidence="1">
    <location>
        <position position="194"/>
    </location>
    <ligand>
        <name>1-deoxy-D-xylulose 5-phosphate</name>
        <dbReference type="ChEBI" id="CHEBI:57792"/>
    </ligand>
</feature>
<feature type="binding site" evidence="1">
    <location>
        <position position="199"/>
    </location>
    <ligand>
        <name>1-deoxy-D-xylulose 5-phosphate</name>
        <dbReference type="ChEBI" id="CHEBI:57792"/>
    </ligand>
</feature>
<feature type="binding site" evidence="1">
    <location>
        <position position="200"/>
    </location>
    <ligand>
        <name>1-deoxy-D-xylulose 5-phosphate</name>
        <dbReference type="ChEBI" id="CHEBI:57792"/>
    </ligand>
</feature>
<feature type="binding site" evidence="1">
    <location>
        <position position="203"/>
    </location>
    <ligand>
        <name>1-deoxy-D-xylulose 5-phosphate</name>
        <dbReference type="ChEBI" id="CHEBI:57792"/>
    </ligand>
</feature>
<feature type="binding site" evidence="1">
    <location>
        <position position="203"/>
    </location>
    <ligand>
        <name>Mn(2+)</name>
        <dbReference type="ChEBI" id="CHEBI:29035"/>
    </ligand>
</feature>
<accession>B6JKE8</accession>
<dbReference type="EC" id="1.1.1.267" evidence="1"/>
<dbReference type="EMBL" id="CP001217">
    <property type="protein sequence ID" value="ACJ07376.1"/>
    <property type="molecule type" value="Genomic_DNA"/>
</dbReference>
<dbReference type="SMR" id="B6JKE8"/>
<dbReference type="KEGG" id="hpp:HPP12_0217"/>
<dbReference type="HOGENOM" id="CLU_035714_4_0_7"/>
<dbReference type="UniPathway" id="UPA00056">
    <property type="reaction ID" value="UER00092"/>
</dbReference>
<dbReference type="Proteomes" id="UP000008198">
    <property type="component" value="Chromosome"/>
</dbReference>
<dbReference type="GO" id="GO:0030604">
    <property type="term" value="F:1-deoxy-D-xylulose-5-phosphate reductoisomerase activity"/>
    <property type="evidence" value="ECO:0007669"/>
    <property type="project" value="UniProtKB-UniRule"/>
</dbReference>
<dbReference type="GO" id="GO:0030145">
    <property type="term" value="F:manganese ion binding"/>
    <property type="evidence" value="ECO:0007669"/>
    <property type="project" value="TreeGrafter"/>
</dbReference>
<dbReference type="GO" id="GO:0070402">
    <property type="term" value="F:NADPH binding"/>
    <property type="evidence" value="ECO:0007669"/>
    <property type="project" value="InterPro"/>
</dbReference>
<dbReference type="GO" id="GO:0051484">
    <property type="term" value="P:isopentenyl diphosphate biosynthetic process, methylerythritol 4-phosphate pathway involved in terpenoid biosynthetic process"/>
    <property type="evidence" value="ECO:0007669"/>
    <property type="project" value="TreeGrafter"/>
</dbReference>
<dbReference type="FunFam" id="3.40.50.720:FF:000771">
    <property type="entry name" value="1-deoxy-D-xylulose 5-phosphate reductoisomerase"/>
    <property type="match status" value="1"/>
</dbReference>
<dbReference type="Gene3D" id="1.10.1740.10">
    <property type="match status" value="1"/>
</dbReference>
<dbReference type="Gene3D" id="3.40.50.720">
    <property type="entry name" value="NAD(P)-binding Rossmann-like Domain"/>
    <property type="match status" value="1"/>
</dbReference>
<dbReference type="HAMAP" id="MF_00183">
    <property type="entry name" value="DXP_reductoisom"/>
    <property type="match status" value="1"/>
</dbReference>
<dbReference type="InterPro" id="IPR003821">
    <property type="entry name" value="DXP_reductoisomerase"/>
</dbReference>
<dbReference type="InterPro" id="IPR013644">
    <property type="entry name" value="DXP_reductoisomerase_C"/>
</dbReference>
<dbReference type="InterPro" id="IPR013512">
    <property type="entry name" value="DXP_reductoisomerase_N"/>
</dbReference>
<dbReference type="InterPro" id="IPR026877">
    <property type="entry name" value="DXPR_C"/>
</dbReference>
<dbReference type="InterPro" id="IPR036169">
    <property type="entry name" value="DXPR_C_sf"/>
</dbReference>
<dbReference type="InterPro" id="IPR036291">
    <property type="entry name" value="NAD(P)-bd_dom_sf"/>
</dbReference>
<dbReference type="NCBIfam" id="TIGR00243">
    <property type="entry name" value="Dxr"/>
    <property type="match status" value="1"/>
</dbReference>
<dbReference type="PANTHER" id="PTHR30525">
    <property type="entry name" value="1-DEOXY-D-XYLULOSE 5-PHOSPHATE REDUCTOISOMERASE"/>
    <property type="match status" value="1"/>
</dbReference>
<dbReference type="PANTHER" id="PTHR30525:SF0">
    <property type="entry name" value="1-DEOXY-D-XYLULOSE 5-PHOSPHATE REDUCTOISOMERASE, CHLOROPLASTIC"/>
    <property type="match status" value="1"/>
</dbReference>
<dbReference type="Pfam" id="PF08436">
    <property type="entry name" value="DXP_redisom_C"/>
    <property type="match status" value="1"/>
</dbReference>
<dbReference type="Pfam" id="PF02670">
    <property type="entry name" value="DXP_reductoisom"/>
    <property type="match status" value="1"/>
</dbReference>
<dbReference type="Pfam" id="PF13288">
    <property type="entry name" value="DXPR_C"/>
    <property type="match status" value="1"/>
</dbReference>
<dbReference type="PIRSF" id="PIRSF006205">
    <property type="entry name" value="Dxp_reductismrs"/>
    <property type="match status" value="1"/>
</dbReference>
<dbReference type="SUPFAM" id="SSF69055">
    <property type="entry name" value="1-deoxy-D-xylulose-5-phosphate reductoisomerase, C-terminal domain"/>
    <property type="match status" value="1"/>
</dbReference>
<dbReference type="SUPFAM" id="SSF55347">
    <property type="entry name" value="Glyceraldehyde-3-phosphate dehydrogenase-like, C-terminal domain"/>
    <property type="match status" value="1"/>
</dbReference>
<dbReference type="SUPFAM" id="SSF51735">
    <property type="entry name" value="NAD(P)-binding Rossmann-fold domains"/>
    <property type="match status" value="1"/>
</dbReference>
<proteinExistence type="inferred from homology"/>